<sequence length="188" mass="21301">MATEGDPTDFVKVLHLLVISFTWGMQVWVSFIAGFVLISQVSMHTFGLVQSKLFPVYFYCLLGGNAVSLAVYAVYHPRELLDWHEGIQMSLFFVAVIMAGLNAQWFGPSATENMLVMQEIEKEHGLGNQVGMSSNREGYTKLREQDPKYKEHRSTFYRYHGLSNLCNLIGFFCITVNLIYLALNLGTI</sequence>
<gene>
    <name type="primary">tmem205</name>
    <name type="ORF">zgc:158860</name>
</gene>
<reference key="1">
    <citation type="submission" date="2006-12" db="EMBL/GenBank/DDBJ databases">
        <authorList>
            <consortium name="NIH - Zebrafish Gene Collection (ZGC) project"/>
        </authorList>
    </citation>
    <scope>NUCLEOTIDE SEQUENCE [LARGE SCALE MRNA]</scope>
    <source>
        <tissue>Olfactory epithelium</tissue>
    </source>
</reference>
<organism>
    <name type="scientific">Danio rerio</name>
    <name type="common">Zebrafish</name>
    <name type="synonym">Brachydanio rerio</name>
    <dbReference type="NCBI Taxonomy" id="7955"/>
    <lineage>
        <taxon>Eukaryota</taxon>
        <taxon>Metazoa</taxon>
        <taxon>Chordata</taxon>
        <taxon>Craniata</taxon>
        <taxon>Vertebrata</taxon>
        <taxon>Euteleostomi</taxon>
        <taxon>Actinopterygii</taxon>
        <taxon>Neopterygii</taxon>
        <taxon>Teleostei</taxon>
        <taxon>Ostariophysi</taxon>
        <taxon>Cypriniformes</taxon>
        <taxon>Danionidae</taxon>
        <taxon>Danioninae</taxon>
        <taxon>Danio</taxon>
    </lineage>
</organism>
<dbReference type="EMBL" id="BC129498">
    <property type="protein sequence ID" value="AAI29499.1"/>
    <property type="molecule type" value="mRNA"/>
</dbReference>
<dbReference type="RefSeq" id="NP_001074155.1">
    <property type="nucleotide sequence ID" value="NM_001080686.1"/>
</dbReference>
<dbReference type="RefSeq" id="XP_005168535.1">
    <property type="nucleotide sequence ID" value="XM_005168478.4"/>
</dbReference>
<dbReference type="FunCoup" id="A1L2F6">
    <property type="interactions" value="321"/>
</dbReference>
<dbReference type="STRING" id="7955.ENSDARP00000137350"/>
<dbReference type="PaxDb" id="7955-ENSDARP00000064027"/>
<dbReference type="PeptideAtlas" id="A1L2F6"/>
<dbReference type="Ensembl" id="ENSDART00000162853">
    <property type="protein sequence ID" value="ENSDARP00000137350"/>
    <property type="gene ID" value="ENSDARG00000100677"/>
</dbReference>
<dbReference type="Ensembl" id="ENSDART00000162932">
    <property type="protein sequence ID" value="ENSDARP00000136289"/>
    <property type="gene ID" value="ENSDARG00000100677"/>
</dbReference>
<dbReference type="Ensembl" id="ENSDART00000168229">
    <property type="protein sequence ID" value="ENSDARP00000135732"/>
    <property type="gene ID" value="ENSDARG00000100677"/>
</dbReference>
<dbReference type="GeneID" id="791204"/>
<dbReference type="KEGG" id="dre:791204"/>
<dbReference type="AGR" id="ZFIN:ZDB-GENE-070112-1692"/>
<dbReference type="CTD" id="374882"/>
<dbReference type="ZFIN" id="ZDB-GENE-070112-1692">
    <property type="gene designation" value="tmem205"/>
</dbReference>
<dbReference type="eggNOG" id="KOG2886">
    <property type="taxonomic scope" value="Eukaryota"/>
</dbReference>
<dbReference type="HOGENOM" id="CLU_094297_1_1_1"/>
<dbReference type="InParanoid" id="A1L2F6"/>
<dbReference type="OMA" id="FQMRAVE"/>
<dbReference type="OrthoDB" id="1641132at2759"/>
<dbReference type="PhylomeDB" id="A1L2F6"/>
<dbReference type="TreeFam" id="TF323838"/>
<dbReference type="PRO" id="PR:A1L2F6"/>
<dbReference type="Proteomes" id="UP000000437">
    <property type="component" value="Chromosome 3"/>
</dbReference>
<dbReference type="Bgee" id="ENSDARG00000100677">
    <property type="expression patterns" value="Expressed in granulocyte and 22 other cell types or tissues"/>
</dbReference>
<dbReference type="ExpressionAtlas" id="A1L2F6">
    <property type="expression patterns" value="baseline and differential"/>
</dbReference>
<dbReference type="GO" id="GO:0016020">
    <property type="term" value="C:membrane"/>
    <property type="evidence" value="ECO:0007669"/>
    <property type="project" value="UniProtKB-SubCell"/>
</dbReference>
<dbReference type="InterPro" id="IPR042623">
    <property type="entry name" value="TMEM205"/>
</dbReference>
<dbReference type="InterPro" id="IPR025423">
    <property type="entry name" value="TMEM205-like"/>
</dbReference>
<dbReference type="PANTHER" id="PTHR46916">
    <property type="entry name" value="TRANSMEMBRANE PROTEIN 205"/>
    <property type="match status" value="1"/>
</dbReference>
<dbReference type="PANTHER" id="PTHR46916:SF2">
    <property type="entry name" value="TRANSMEMBRANE PROTEIN 205"/>
    <property type="match status" value="1"/>
</dbReference>
<dbReference type="Pfam" id="PF13664">
    <property type="entry name" value="DUF4149"/>
    <property type="match status" value="1"/>
</dbReference>
<feature type="chain" id="PRO_0000317504" description="Transmembrane protein 205">
    <location>
        <begin position="1"/>
        <end position="188"/>
    </location>
</feature>
<feature type="transmembrane region" description="Helical" evidence="1">
    <location>
        <begin position="18"/>
        <end position="38"/>
    </location>
</feature>
<feature type="transmembrane region" description="Helical" evidence="1">
    <location>
        <begin position="54"/>
        <end position="74"/>
    </location>
</feature>
<feature type="transmembrane region" description="Helical" evidence="1">
    <location>
        <begin position="86"/>
        <end position="106"/>
    </location>
</feature>
<feature type="transmembrane region" description="Helical" evidence="1">
    <location>
        <begin position="168"/>
        <end position="188"/>
    </location>
</feature>
<proteinExistence type="evidence at transcript level"/>
<evidence type="ECO:0000255" key="1"/>
<evidence type="ECO:0000305" key="2"/>
<protein>
    <recommendedName>
        <fullName>Transmembrane protein 205</fullName>
    </recommendedName>
</protein>
<keyword id="KW-0472">Membrane</keyword>
<keyword id="KW-1185">Reference proteome</keyword>
<keyword id="KW-0812">Transmembrane</keyword>
<keyword id="KW-1133">Transmembrane helix</keyword>
<comment type="subcellular location">
    <subcellularLocation>
        <location evidence="2">Membrane</location>
        <topology evidence="2">Multi-pass membrane protein</topology>
    </subcellularLocation>
</comment>
<comment type="similarity">
    <text evidence="2">Belongs to the TMEM205 family.</text>
</comment>
<accession>A1L2F6</accession>
<name>TM205_DANRE</name>